<accession>P23136</accession>
<protein>
    <recommendedName>
        <fullName>Ubiquinol-cytochrome c reductase iron-sulfur subunit</fullName>
        <ecNumber>7.1.1.8</ecNumber>
    </recommendedName>
    <alternativeName>
        <fullName>Rieske iron-sulfur protein</fullName>
        <shortName>RISP</shortName>
    </alternativeName>
</protein>
<gene>
    <name type="primary">petA</name>
    <name type="synonym">fbcF</name>
</gene>
<reference key="1">
    <citation type="journal article" date="1990" name="Mol. Gen. Genet.">
        <title>The pet genes of Rhodospirillum rubrum: cloning and sequencing of the genes for the cytochrome bc1-complex.</title>
        <authorList>
            <person name="Majewski C."/>
            <person name="Trebst A."/>
        </authorList>
    </citation>
    <scope>NUCLEOTIDE SEQUENCE [GENOMIC DNA]</scope>
    <scope>PROTEIN SEQUENCE OF 2-35</scope>
    <source>
        <strain>FR1</strain>
    </source>
</reference>
<proteinExistence type="evidence at protein level"/>
<evidence type="ECO:0000255" key="1"/>
<evidence type="ECO:0000255" key="2">
    <source>
        <dbReference type="PROSITE-ProRule" id="PRU00628"/>
    </source>
</evidence>
<evidence type="ECO:0000269" key="3">
    <source>
    </source>
</evidence>
<evidence type="ECO:0000305" key="4"/>
<keyword id="KW-0001">2Fe-2S</keyword>
<keyword id="KW-0997">Cell inner membrane</keyword>
<keyword id="KW-1003">Cell membrane</keyword>
<keyword id="KW-0903">Direct protein sequencing</keyword>
<keyword id="KW-1015">Disulfide bond</keyword>
<keyword id="KW-0249">Electron transport</keyword>
<keyword id="KW-0408">Iron</keyword>
<keyword id="KW-0411">Iron-sulfur</keyword>
<keyword id="KW-0472">Membrane</keyword>
<keyword id="KW-0479">Metal-binding</keyword>
<keyword id="KW-1278">Translocase</keyword>
<keyword id="KW-0812">Transmembrane</keyword>
<keyword id="KW-1133">Transmembrane helix</keyword>
<keyword id="KW-0813">Transport</keyword>
<organism>
    <name type="scientific">Rhodospirillum rubrum</name>
    <dbReference type="NCBI Taxonomy" id="1085"/>
    <lineage>
        <taxon>Bacteria</taxon>
        <taxon>Pseudomonadati</taxon>
        <taxon>Pseudomonadota</taxon>
        <taxon>Alphaproteobacteria</taxon>
        <taxon>Rhodospirillales</taxon>
        <taxon>Rhodospirillaceae</taxon>
        <taxon>Rhodospirillum</taxon>
    </lineage>
</organism>
<sequence>MAEAEHTASTPGGESSRRDFLIYGTTAVGAVGVALAVWPFIDFMNPAADTLALASTEVDVSAIAEGQAITVTWRGKPVFVRHRTQKEIVVARAVDPASLRDPQTDEARVQQAQWLVMVGVCTHLGCIPLGQKAGDPKGDFDGWFCPCHGSHYDSAGRIRKGPAPLNLPVPPYAFTDDTTVLIG</sequence>
<name>UCRI_RHORU</name>
<dbReference type="EC" id="7.1.1.8"/>
<dbReference type="EMBL" id="X55387">
    <property type="protein sequence ID" value="CAA39058.1"/>
    <property type="molecule type" value="Genomic_DNA"/>
</dbReference>
<dbReference type="PIR" id="S12256">
    <property type="entry name" value="RDQFBR"/>
</dbReference>
<dbReference type="SMR" id="P23136"/>
<dbReference type="GO" id="GO:0005886">
    <property type="term" value="C:plasma membrane"/>
    <property type="evidence" value="ECO:0007669"/>
    <property type="project" value="UniProtKB-SubCell"/>
</dbReference>
<dbReference type="GO" id="GO:0051537">
    <property type="term" value="F:2 iron, 2 sulfur cluster binding"/>
    <property type="evidence" value="ECO:0007669"/>
    <property type="project" value="UniProtKB-KW"/>
</dbReference>
<dbReference type="GO" id="GO:0046872">
    <property type="term" value="F:metal ion binding"/>
    <property type="evidence" value="ECO:0007669"/>
    <property type="project" value="UniProtKB-KW"/>
</dbReference>
<dbReference type="GO" id="GO:0008121">
    <property type="term" value="F:ubiquinol-cytochrome-c reductase activity"/>
    <property type="evidence" value="ECO:0007669"/>
    <property type="project" value="UniProtKB-EC"/>
</dbReference>
<dbReference type="CDD" id="cd03470">
    <property type="entry name" value="Rieske_cytochrome_bc1"/>
    <property type="match status" value="1"/>
</dbReference>
<dbReference type="FunFam" id="2.102.10.10:FF:000001">
    <property type="entry name" value="Cytochrome b-c1 complex subunit Rieske, mitochondrial"/>
    <property type="match status" value="1"/>
</dbReference>
<dbReference type="Gene3D" id="2.102.10.10">
    <property type="entry name" value="Rieske [2Fe-2S] iron-sulphur domain"/>
    <property type="match status" value="1"/>
</dbReference>
<dbReference type="Gene3D" id="1.20.5.510">
    <property type="entry name" value="Single helix bin"/>
    <property type="match status" value="1"/>
</dbReference>
<dbReference type="InterPro" id="IPR017941">
    <property type="entry name" value="Rieske_2Fe-2S"/>
</dbReference>
<dbReference type="InterPro" id="IPR036922">
    <property type="entry name" value="Rieske_2Fe-2S_sf"/>
</dbReference>
<dbReference type="InterPro" id="IPR014349">
    <property type="entry name" value="Rieske_Fe-S_prot"/>
</dbReference>
<dbReference type="InterPro" id="IPR005805">
    <property type="entry name" value="Rieske_Fe-S_prot_C"/>
</dbReference>
<dbReference type="InterPro" id="IPR006311">
    <property type="entry name" value="TAT_signal"/>
</dbReference>
<dbReference type="InterPro" id="IPR019546">
    <property type="entry name" value="TAT_signal_bac_arc"/>
</dbReference>
<dbReference type="InterPro" id="IPR019470">
    <property type="entry name" value="Ubiq_cytC_Rdtase_Fe-S_su_TAT"/>
</dbReference>
<dbReference type="InterPro" id="IPR006317">
    <property type="entry name" value="Ubiquinol_cyt_c_Rdtase_Fe-S-su"/>
</dbReference>
<dbReference type="NCBIfam" id="TIGR01416">
    <property type="entry name" value="Rieske_proteo"/>
    <property type="match status" value="1"/>
</dbReference>
<dbReference type="NCBIfam" id="TIGR01409">
    <property type="entry name" value="TAT_signal_seq"/>
    <property type="match status" value="1"/>
</dbReference>
<dbReference type="PANTHER" id="PTHR10134">
    <property type="entry name" value="CYTOCHROME B-C1 COMPLEX SUBUNIT RIESKE, MITOCHONDRIAL"/>
    <property type="match status" value="1"/>
</dbReference>
<dbReference type="Pfam" id="PF00355">
    <property type="entry name" value="Rieske"/>
    <property type="match status" value="1"/>
</dbReference>
<dbReference type="Pfam" id="PF10399">
    <property type="entry name" value="UCR_Fe-S_N"/>
    <property type="match status" value="1"/>
</dbReference>
<dbReference type="PRINTS" id="PR00162">
    <property type="entry name" value="RIESKE"/>
</dbReference>
<dbReference type="SUPFAM" id="SSF50022">
    <property type="entry name" value="ISP domain"/>
    <property type="match status" value="1"/>
</dbReference>
<dbReference type="PROSITE" id="PS51296">
    <property type="entry name" value="RIESKE"/>
    <property type="match status" value="1"/>
</dbReference>
<dbReference type="PROSITE" id="PS51318">
    <property type="entry name" value="TAT"/>
    <property type="match status" value="1"/>
</dbReference>
<feature type="initiator methionine" description="Removed" evidence="3">
    <location>
        <position position="1"/>
    </location>
</feature>
<feature type="chain" id="PRO_0000127763" description="Ubiquinol-cytochrome c reductase iron-sulfur subunit">
    <location>
        <begin position="2"/>
        <end position="183"/>
    </location>
</feature>
<feature type="transmembrane region" description="Helical" evidence="1">
    <location>
        <begin position="21"/>
        <end position="41"/>
    </location>
</feature>
<feature type="domain" description="Rieske" evidence="2">
    <location>
        <begin position="88"/>
        <end position="181"/>
    </location>
</feature>
<feature type="binding site" evidence="2">
    <location>
        <position position="121"/>
    </location>
    <ligand>
        <name>[2Fe-2S] cluster</name>
        <dbReference type="ChEBI" id="CHEBI:190135"/>
    </ligand>
</feature>
<feature type="binding site" evidence="2">
    <location>
        <position position="123"/>
    </location>
    <ligand>
        <name>[2Fe-2S] cluster</name>
        <dbReference type="ChEBI" id="CHEBI:190135"/>
    </ligand>
</feature>
<feature type="binding site" evidence="2">
    <location>
        <position position="145"/>
    </location>
    <ligand>
        <name>[2Fe-2S] cluster</name>
        <dbReference type="ChEBI" id="CHEBI:190135"/>
    </ligand>
</feature>
<feature type="binding site" evidence="2">
    <location>
        <position position="148"/>
    </location>
    <ligand>
        <name>[2Fe-2S] cluster</name>
        <dbReference type="ChEBI" id="CHEBI:190135"/>
    </ligand>
</feature>
<feature type="disulfide bond" evidence="2">
    <location>
        <begin position="126"/>
        <end position="147"/>
    </location>
</feature>
<comment type="function">
    <text>Component of the ubiquinol-cytochrome c reductase complex (complex III or cytochrome b-c1 complex), which is a respiratory chain that generates an electrochemical potential coupled to ATP synthesis.</text>
</comment>
<comment type="catalytic activity">
    <reaction>
        <text>a quinol + 2 Fe(III)-[cytochrome c](out) = a quinone + 2 Fe(II)-[cytochrome c](out) + 2 H(+)(out)</text>
        <dbReference type="Rhea" id="RHEA:11484"/>
        <dbReference type="Rhea" id="RHEA-COMP:10350"/>
        <dbReference type="Rhea" id="RHEA-COMP:14399"/>
        <dbReference type="ChEBI" id="CHEBI:15378"/>
        <dbReference type="ChEBI" id="CHEBI:24646"/>
        <dbReference type="ChEBI" id="CHEBI:29033"/>
        <dbReference type="ChEBI" id="CHEBI:29034"/>
        <dbReference type="ChEBI" id="CHEBI:132124"/>
        <dbReference type="EC" id="7.1.1.8"/>
    </reaction>
</comment>
<comment type="cofactor">
    <cofactor evidence="2">
        <name>[2Fe-2S] cluster</name>
        <dbReference type="ChEBI" id="CHEBI:190135"/>
    </cofactor>
    <text evidence="2">Binds 1 [2Fe-2S] cluster per subunit.</text>
</comment>
<comment type="subunit">
    <text>The main subunits of complex b-c1 are: cytochrome b, cytochrome c1 and the Rieske protein.</text>
</comment>
<comment type="subcellular location">
    <subcellularLocation>
        <location>Cell inner membrane</location>
        <topology>Single-pass membrane protein</topology>
    </subcellularLocation>
</comment>
<comment type="miscellaneous">
    <text>The Rieske protein is a high potential 2Fe-2S protein.</text>
</comment>
<comment type="similarity">
    <text evidence="4">Belongs to the Rieske iron-sulfur protein family.</text>
</comment>